<proteinExistence type="inferred from homology"/>
<accession>P35839</accession>
<sequence length="280" mass="29437">MASSFKSPADTAKACVGVAALKEKAPLSNLIVLSFVAGAYIAFGGLLAEVATGGMAAAGWPTGLVKLVFGGVFPVGLMLVVIAGSELFTGNCMYMPMGILQGEASVMGTIKNWVGSWVFNLVGALFVAYVLAYLTGILTAEPWAATAVTIAKTKALGGAQFIAAGKTVTSLSWMQVFWRAIGCNWLVCLAVYLAVASDDVIGKSFGIWFPIMAFVCIGFEHVVANMFFIPVGIFIGGVTWSQFFINNMIPATLGNIVGGAIFVGCIYWFTYLRGTNKAKA</sequence>
<name>FDHC_METFO</name>
<reference key="1">
    <citation type="journal article" date="1992" name="J. Bacteriol.">
        <title>Identification of formate dehydrogenase-specific mRNA species and nucleotide sequence of the fdhC gene of Methanobacterium formicicum.</title>
        <authorList>
            <person name="White W.B."/>
            <person name="Ferry J.G."/>
        </authorList>
    </citation>
    <scope>NUCLEOTIDE SEQUENCE [GENOMIC DNA]</scope>
    <source>
        <strain>JF-1</strain>
    </source>
</reference>
<feature type="chain" id="PRO_0000094722" description="Probable formate transporter">
    <location>
        <begin position="1"/>
        <end position="280"/>
    </location>
</feature>
<feature type="transmembrane region" description="Helical" evidence="1">
    <location>
        <begin position="33"/>
        <end position="49"/>
    </location>
</feature>
<feature type="transmembrane region" description="Helical" evidence="1">
    <location>
        <begin position="67"/>
        <end position="83"/>
    </location>
</feature>
<feature type="transmembrane region" description="Helical" evidence="1">
    <location>
        <begin position="116"/>
        <end position="133"/>
    </location>
</feature>
<feature type="transmembrane region" description="Helical" evidence="1">
    <location>
        <begin position="177"/>
        <end position="195"/>
    </location>
</feature>
<feature type="transmembrane region" description="Helical" evidence="1">
    <location>
        <begin position="204"/>
        <end position="219"/>
    </location>
</feature>
<feature type="transmembrane region" description="Helical" evidence="1">
    <location>
        <begin position="253"/>
        <end position="272"/>
    </location>
</feature>
<gene>
    <name type="primary">fdhC</name>
</gene>
<protein>
    <recommendedName>
        <fullName>Probable formate transporter</fullName>
    </recommendedName>
</protein>
<evidence type="ECO:0000255" key="1"/>
<evidence type="ECO:0000305" key="2"/>
<comment type="function">
    <text>May act as a formate transporter.</text>
</comment>
<comment type="subcellular location">
    <subcellularLocation>
        <location evidence="2">Cell membrane</location>
        <topology evidence="2">Multi-pass membrane protein</topology>
    </subcellularLocation>
</comment>
<comment type="similarity">
    <text evidence="2">Belongs to the FNT transporter (TC 1.A.16) family.</text>
</comment>
<dbReference type="EMBL" id="M64798">
    <property type="protein sequence ID" value="AAA73026.1"/>
    <property type="molecule type" value="Genomic_DNA"/>
</dbReference>
<dbReference type="PIR" id="A42712">
    <property type="entry name" value="A42712"/>
</dbReference>
<dbReference type="SMR" id="P35839"/>
<dbReference type="STRING" id="2162.BRM9_0169"/>
<dbReference type="TCDB" id="1.A.16.2.1">
    <property type="family name" value="the formate-nitrite transporter (fnt) family"/>
</dbReference>
<dbReference type="GO" id="GO:0005886">
    <property type="term" value="C:plasma membrane"/>
    <property type="evidence" value="ECO:0007669"/>
    <property type="project" value="UniProtKB-SubCell"/>
</dbReference>
<dbReference type="GO" id="GO:0015499">
    <property type="term" value="F:formate transmembrane transporter activity"/>
    <property type="evidence" value="ECO:0000314"/>
    <property type="project" value="MENGO"/>
</dbReference>
<dbReference type="GO" id="GO:0015513">
    <property type="term" value="F:high-affinity secondary active nitrite transmembrane transporter activity"/>
    <property type="evidence" value="ECO:0007669"/>
    <property type="project" value="TreeGrafter"/>
</dbReference>
<dbReference type="GO" id="GO:0015707">
    <property type="term" value="P:nitrite transport"/>
    <property type="evidence" value="ECO:0007669"/>
    <property type="project" value="TreeGrafter"/>
</dbReference>
<dbReference type="FunFam" id="1.20.1080.10:FF:000011">
    <property type="entry name" value="Formate family transporter"/>
    <property type="match status" value="1"/>
</dbReference>
<dbReference type="Gene3D" id="1.20.1080.10">
    <property type="entry name" value="Glycerol uptake facilitator protein"/>
    <property type="match status" value="1"/>
</dbReference>
<dbReference type="InterPro" id="IPR023271">
    <property type="entry name" value="Aquaporin-like"/>
</dbReference>
<dbReference type="InterPro" id="IPR000292">
    <property type="entry name" value="For/NO2_transpt"/>
</dbReference>
<dbReference type="InterPro" id="IPR024002">
    <property type="entry name" value="For/NO2_transpt_CS"/>
</dbReference>
<dbReference type="NCBIfam" id="TIGR00790">
    <property type="entry name" value="fnt"/>
    <property type="match status" value="1"/>
</dbReference>
<dbReference type="PANTHER" id="PTHR30520">
    <property type="entry name" value="FORMATE TRANSPORTER-RELATED"/>
    <property type="match status" value="1"/>
</dbReference>
<dbReference type="PANTHER" id="PTHR30520:SF6">
    <property type="entry name" value="FORMATE_NITRATE FAMILY TRANSPORTER (EUROFUNG)"/>
    <property type="match status" value="1"/>
</dbReference>
<dbReference type="Pfam" id="PF01226">
    <property type="entry name" value="Form_Nir_trans"/>
    <property type="match status" value="1"/>
</dbReference>
<dbReference type="PROSITE" id="PS01005">
    <property type="entry name" value="FORMATE_NITRITE_TP_1"/>
    <property type="match status" value="1"/>
</dbReference>
<dbReference type="PROSITE" id="PS01006">
    <property type="entry name" value="FORMATE_NITRITE_TP_2"/>
    <property type="match status" value="1"/>
</dbReference>
<keyword id="KW-1003">Cell membrane</keyword>
<keyword id="KW-0472">Membrane</keyword>
<keyword id="KW-0812">Transmembrane</keyword>
<keyword id="KW-1133">Transmembrane helix</keyword>
<keyword id="KW-0813">Transport</keyword>
<organism>
    <name type="scientific">Methanobacterium formicicum</name>
    <dbReference type="NCBI Taxonomy" id="2162"/>
    <lineage>
        <taxon>Archaea</taxon>
        <taxon>Methanobacteriati</taxon>
        <taxon>Methanobacteriota</taxon>
        <taxon>Methanomada group</taxon>
        <taxon>Methanobacteria</taxon>
        <taxon>Methanobacteriales</taxon>
        <taxon>Methanobacteriaceae</taxon>
        <taxon>Methanobacterium</taxon>
    </lineage>
</organism>